<keyword id="KW-0002">3D-structure</keyword>
<keyword id="KW-0961">Cell wall biogenesis/degradation</keyword>
<keyword id="KW-0963">Cytoplasm</keyword>
<keyword id="KW-0596">Phosphopantetheine</keyword>
<keyword id="KW-0597">Phosphoprotein</keyword>
<keyword id="KW-1185">Reference proteome</keyword>
<accession>P39579</accession>
<feature type="chain" id="PRO_0000213087" description="D-alanyl carrier protein">
    <location>
        <begin position="1"/>
        <end position="78"/>
    </location>
</feature>
<feature type="domain" description="Carrier" evidence="1">
    <location>
        <begin position="1"/>
        <end position="78"/>
    </location>
</feature>
<feature type="modified residue" description="O-(pantetheine 4'-phosphoryl)serine" evidence="1 2 5">
    <location>
        <position position="36"/>
    </location>
</feature>
<feature type="helix" evidence="6">
    <location>
        <begin position="3"/>
        <end position="15"/>
    </location>
</feature>
<feature type="helix" evidence="6">
    <location>
        <begin position="19"/>
        <end position="22"/>
    </location>
</feature>
<feature type="turn" evidence="6">
    <location>
        <begin position="28"/>
        <end position="32"/>
    </location>
</feature>
<feature type="helix" evidence="6">
    <location>
        <begin position="36"/>
        <end position="50"/>
    </location>
</feature>
<feature type="helix" evidence="6">
    <location>
        <begin position="56"/>
        <end position="58"/>
    </location>
</feature>
<feature type="turn" evidence="6">
    <location>
        <begin position="61"/>
        <end position="63"/>
    </location>
</feature>
<feature type="helix" evidence="6">
    <location>
        <begin position="67"/>
        <end position="77"/>
    </location>
</feature>
<name>DLTC_BACSU</name>
<sequence>MDFKQEVLDVLAEVCQDDIVKENPDIEIFEEGLLDSFGTVELLLAIENRFDILVPITEFDRDVWNTPNNIVNQLSELK</sequence>
<dbReference type="EMBL" id="X73124">
    <property type="protein sequence ID" value="CAA51559.1"/>
    <property type="molecule type" value="Genomic_DNA"/>
</dbReference>
<dbReference type="EMBL" id="AL009126">
    <property type="protein sequence ID" value="CAB15878.1"/>
    <property type="molecule type" value="Genomic_DNA"/>
</dbReference>
<dbReference type="PIR" id="S39658">
    <property type="entry name" value="S39658"/>
</dbReference>
<dbReference type="RefSeq" id="NP_391731.1">
    <property type="nucleotide sequence ID" value="NC_000964.3"/>
</dbReference>
<dbReference type="RefSeq" id="WP_003227325.1">
    <property type="nucleotide sequence ID" value="NZ_OZ025638.1"/>
</dbReference>
<dbReference type="PDB" id="4BPF">
    <property type="method" value="X-ray"/>
    <property type="resolution" value="1.01 A"/>
    <property type="chains" value="A=1-78"/>
</dbReference>
<dbReference type="PDB" id="4BPG">
    <property type="method" value="X-ray"/>
    <property type="resolution" value="2.20 A"/>
    <property type="chains" value="A/B=1-78"/>
</dbReference>
<dbReference type="PDB" id="4BPH">
    <property type="method" value="X-ray"/>
    <property type="resolution" value="1.80 A"/>
    <property type="chains" value="A=1-78"/>
</dbReference>
<dbReference type="PDBsum" id="4BPF"/>
<dbReference type="PDBsum" id="4BPG"/>
<dbReference type="PDBsum" id="4BPH"/>
<dbReference type="SMR" id="P39579"/>
<dbReference type="FunCoup" id="P39579">
    <property type="interactions" value="190"/>
</dbReference>
<dbReference type="STRING" id="224308.BSU38520"/>
<dbReference type="TCDB" id="2.A.50.2.1">
    <property type="family name" value="the glycerol uptake (gup) or membrane-bound acyl transferase (mboat) family"/>
</dbReference>
<dbReference type="jPOST" id="P39579"/>
<dbReference type="PaxDb" id="224308-BSU38520"/>
<dbReference type="EnsemblBacteria" id="CAB15878">
    <property type="protein sequence ID" value="CAB15878"/>
    <property type="gene ID" value="BSU_38520"/>
</dbReference>
<dbReference type="GeneID" id="86871515"/>
<dbReference type="GeneID" id="937361"/>
<dbReference type="KEGG" id="bsu:BSU38520"/>
<dbReference type="PATRIC" id="fig|224308.179.peg.4171"/>
<dbReference type="eggNOG" id="COG0236">
    <property type="taxonomic scope" value="Bacteria"/>
</dbReference>
<dbReference type="InParanoid" id="P39579"/>
<dbReference type="OrthoDB" id="6462171at2"/>
<dbReference type="PhylomeDB" id="P39579"/>
<dbReference type="BioCyc" id="BSUB:BSU38520-MONOMER"/>
<dbReference type="BioCyc" id="MetaCyc:BSU38520-MONOMER"/>
<dbReference type="UniPathway" id="UPA00556"/>
<dbReference type="EvolutionaryTrace" id="P39579"/>
<dbReference type="PRO" id="PR:P39579"/>
<dbReference type="Proteomes" id="UP000001570">
    <property type="component" value="Chromosome"/>
</dbReference>
<dbReference type="GO" id="GO:0005737">
    <property type="term" value="C:cytoplasm"/>
    <property type="evidence" value="ECO:0007669"/>
    <property type="project" value="UniProtKB-SubCell"/>
</dbReference>
<dbReference type="GO" id="GO:0036370">
    <property type="term" value="F:D-alanyl carrier activity"/>
    <property type="evidence" value="ECO:0007669"/>
    <property type="project" value="UniProtKB-UniRule"/>
</dbReference>
<dbReference type="GO" id="GO:0071555">
    <property type="term" value="P:cell wall organization"/>
    <property type="evidence" value="ECO:0007669"/>
    <property type="project" value="UniProtKB-KW"/>
</dbReference>
<dbReference type="GO" id="GO:0070395">
    <property type="term" value="P:lipoteichoic acid biosynthetic process"/>
    <property type="evidence" value="ECO:0007669"/>
    <property type="project" value="UniProtKB-UniRule"/>
</dbReference>
<dbReference type="Gene3D" id="1.10.1200.10">
    <property type="entry name" value="ACP-like"/>
    <property type="match status" value="1"/>
</dbReference>
<dbReference type="HAMAP" id="MF_00565">
    <property type="entry name" value="DltC"/>
    <property type="match status" value="1"/>
</dbReference>
<dbReference type="InterPro" id="IPR036736">
    <property type="entry name" value="ACP-like_sf"/>
</dbReference>
<dbReference type="InterPro" id="IPR003230">
    <property type="entry name" value="DltC"/>
</dbReference>
<dbReference type="InterPro" id="IPR009081">
    <property type="entry name" value="PP-bd_ACP"/>
</dbReference>
<dbReference type="NCBIfam" id="TIGR01688">
    <property type="entry name" value="dltC"/>
    <property type="match status" value="1"/>
</dbReference>
<dbReference type="NCBIfam" id="NF003464">
    <property type="entry name" value="PRK05087.1"/>
    <property type="match status" value="1"/>
</dbReference>
<dbReference type="Pfam" id="PF00550">
    <property type="entry name" value="PP-binding"/>
    <property type="match status" value="1"/>
</dbReference>
<dbReference type="SUPFAM" id="SSF47336">
    <property type="entry name" value="ACP-like"/>
    <property type="match status" value="1"/>
</dbReference>
<dbReference type="PROSITE" id="PS50075">
    <property type="entry name" value="CARRIER"/>
    <property type="match status" value="1"/>
</dbReference>
<organism>
    <name type="scientific">Bacillus subtilis (strain 168)</name>
    <dbReference type="NCBI Taxonomy" id="224308"/>
    <lineage>
        <taxon>Bacteria</taxon>
        <taxon>Bacillati</taxon>
        <taxon>Bacillota</taxon>
        <taxon>Bacilli</taxon>
        <taxon>Bacillales</taxon>
        <taxon>Bacillaceae</taxon>
        <taxon>Bacillus</taxon>
    </lineage>
</organism>
<comment type="function">
    <text evidence="1 3">Carrier protein involved in the D-alanylation of lipoteichoic acid (LTA). The loading of thioester-linked D-alanine onto DltC is catalyzed by D-alanine--D-alanyl carrier protein ligase DltA. The DltC-carried D-alanyl group is further transferred to cell membrane phosphatidylglycerol (PG) by forming an ester bond, probably catalyzed by DltD. D-alanylation of LTA plays an important role in modulating the properties of the cell wall in Gram-positive bacteria, influencing the net charge of the cell wall.</text>
</comment>
<comment type="pathway">
    <text evidence="1 4">Cell wall biogenesis; lipoteichoic acid biosynthesis.</text>
</comment>
<comment type="subcellular location">
    <subcellularLocation>
        <location evidence="1">Cytoplasm</location>
    </subcellularLocation>
</comment>
<comment type="PTM">
    <text evidence="1 2">4'-phosphopantetheine is transferred from CoA to a specific serine of apo-DCP.</text>
</comment>
<comment type="similarity">
    <text evidence="1">Belongs to the DltC family.</text>
</comment>
<evidence type="ECO:0000255" key="1">
    <source>
        <dbReference type="HAMAP-Rule" id="MF_00565"/>
    </source>
</evidence>
<evidence type="ECO:0000269" key="2">
    <source>
    </source>
</evidence>
<evidence type="ECO:0000269" key="3">
    <source>
    </source>
</evidence>
<evidence type="ECO:0000305" key="4">
    <source>
    </source>
</evidence>
<evidence type="ECO:0007744" key="5">
    <source>
        <dbReference type="PDB" id="4BPH"/>
    </source>
</evidence>
<evidence type="ECO:0007829" key="6">
    <source>
        <dbReference type="PDB" id="4BPF"/>
    </source>
</evidence>
<reference key="1">
    <citation type="journal article" date="1993" name="Mol. Microbiol.">
        <title>Bacillus subtilis genome project: cloning and sequencing of the 97 kb region from 325 degrees to 333 degrees.</title>
        <authorList>
            <person name="Glaser P."/>
            <person name="Kunst F."/>
            <person name="Arnaud M."/>
            <person name="Coudart M.P."/>
            <person name="Gonzales W."/>
            <person name="Hullo M.-F."/>
            <person name="Ionescu M."/>
            <person name="Lubochinsky B."/>
            <person name="Marcelino L."/>
            <person name="Moszer I."/>
            <person name="Presecan E."/>
            <person name="Santana M."/>
            <person name="Schneider E."/>
            <person name="Schweizer J."/>
            <person name="Vertes A."/>
            <person name="Rapoport G."/>
            <person name="Danchin A."/>
        </authorList>
    </citation>
    <scope>NUCLEOTIDE SEQUENCE [GENOMIC DNA]</scope>
    <source>
        <strain>168</strain>
    </source>
</reference>
<reference key="2">
    <citation type="journal article" date="1997" name="Nature">
        <title>The complete genome sequence of the Gram-positive bacterium Bacillus subtilis.</title>
        <authorList>
            <person name="Kunst F."/>
            <person name="Ogasawara N."/>
            <person name="Moszer I."/>
            <person name="Albertini A.M."/>
            <person name="Alloni G."/>
            <person name="Azevedo V."/>
            <person name="Bertero M.G."/>
            <person name="Bessieres P."/>
            <person name="Bolotin A."/>
            <person name="Borchert S."/>
            <person name="Borriss R."/>
            <person name="Boursier L."/>
            <person name="Brans A."/>
            <person name="Braun M."/>
            <person name="Brignell S.C."/>
            <person name="Bron S."/>
            <person name="Brouillet S."/>
            <person name="Bruschi C.V."/>
            <person name="Caldwell B."/>
            <person name="Capuano V."/>
            <person name="Carter N.M."/>
            <person name="Choi S.-K."/>
            <person name="Codani J.-J."/>
            <person name="Connerton I.F."/>
            <person name="Cummings N.J."/>
            <person name="Daniel R.A."/>
            <person name="Denizot F."/>
            <person name="Devine K.M."/>
            <person name="Duesterhoeft A."/>
            <person name="Ehrlich S.D."/>
            <person name="Emmerson P.T."/>
            <person name="Entian K.-D."/>
            <person name="Errington J."/>
            <person name="Fabret C."/>
            <person name="Ferrari E."/>
            <person name="Foulger D."/>
            <person name="Fritz C."/>
            <person name="Fujita M."/>
            <person name="Fujita Y."/>
            <person name="Fuma S."/>
            <person name="Galizzi A."/>
            <person name="Galleron N."/>
            <person name="Ghim S.-Y."/>
            <person name="Glaser P."/>
            <person name="Goffeau A."/>
            <person name="Golightly E.J."/>
            <person name="Grandi G."/>
            <person name="Guiseppi G."/>
            <person name="Guy B.J."/>
            <person name="Haga K."/>
            <person name="Haiech J."/>
            <person name="Harwood C.R."/>
            <person name="Henaut A."/>
            <person name="Hilbert H."/>
            <person name="Holsappel S."/>
            <person name="Hosono S."/>
            <person name="Hullo M.-F."/>
            <person name="Itaya M."/>
            <person name="Jones L.-M."/>
            <person name="Joris B."/>
            <person name="Karamata D."/>
            <person name="Kasahara Y."/>
            <person name="Klaerr-Blanchard M."/>
            <person name="Klein C."/>
            <person name="Kobayashi Y."/>
            <person name="Koetter P."/>
            <person name="Koningstein G."/>
            <person name="Krogh S."/>
            <person name="Kumano M."/>
            <person name="Kurita K."/>
            <person name="Lapidus A."/>
            <person name="Lardinois S."/>
            <person name="Lauber J."/>
            <person name="Lazarevic V."/>
            <person name="Lee S.-M."/>
            <person name="Levine A."/>
            <person name="Liu H."/>
            <person name="Masuda S."/>
            <person name="Mauel C."/>
            <person name="Medigue C."/>
            <person name="Medina N."/>
            <person name="Mellado R.P."/>
            <person name="Mizuno M."/>
            <person name="Moestl D."/>
            <person name="Nakai S."/>
            <person name="Noback M."/>
            <person name="Noone D."/>
            <person name="O'Reilly M."/>
            <person name="Ogawa K."/>
            <person name="Ogiwara A."/>
            <person name="Oudega B."/>
            <person name="Park S.-H."/>
            <person name="Parro V."/>
            <person name="Pohl T.M."/>
            <person name="Portetelle D."/>
            <person name="Porwollik S."/>
            <person name="Prescott A.M."/>
            <person name="Presecan E."/>
            <person name="Pujic P."/>
            <person name="Purnelle B."/>
            <person name="Rapoport G."/>
            <person name="Rey M."/>
            <person name="Reynolds S."/>
            <person name="Rieger M."/>
            <person name="Rivolta C."/>
            <person name="Rocha E."/>
            <person name="Roche B."/>
            <person name="Rose M."/>
            <person name="Sadaie Y."/>
            <person name="Sato T."/>
            <person name="Scanlan E."/>
            <person name="Schleich S."/>
            <person name="Schroeter R."/>
            <person name="Scoffone F."/>
            <person name="Sekiguchi J."/>
            <person name="Sekowska A."/>
            <person name="Seror S.J."/>
            <person name="Serror P."/>
            <person name="Shin B.-S."/>
            <person name="Soldo B."/>
            <person name="Sorokin A."/>
            <person name="Tacconi E."/>
            <person name="Takagi T."/>
            <person name="Takahashi H."/>
            <person name="Takemaru K."/>
            <person name="Takeuchi M."/>
            <person name="Tamakoshi A."/>
            <person name="Tanaka T."/>
            <person name="Terpstra P."/>
            <person name="Tognoni A."/>
            <person name="Tosato V."/>
            <person name="Uchiyama S."/>
            <person name="Vandenbol M."/>
            <person name="Vannier F."/>
            <person name="Vassarotti A."/>
            <person name="Viari A."/>
            <person name="Wambutt R."/>
            <person name="Wedler E."/>
            <person name="Wedler H."/>
            <person name="Weitzenegger T."/>
            <person name="Winters P."/>
            <person name="Wipat A."/>
            <person name="Yamamoto H."/>
            <person name="Yamane K."/>
            <person name="Yasumoto K."/>
            <person name="Yata K."/>
            <person name="Yoshida K."/>
            <person name="Yoshikawa H.-F."/>
            <person name="Zumstein E."/>
            <person name="Yoshikawa H."/>
            <person name="Danchin A."/>
        </authorList>
    </citation>
    <scope>NUCLEOTIDE SEQUENCE [LARGE SCALE GENOMIC DNA]</scope>
    <source>
        <strain>168</strain>
    </source>
</reference>
<reference key="3">
    <citation type="journal article" date="1995" name="J. Biol. Chem.">
        <title>Incorporation of D-alanine into lipoteichoic acid and wall teichoic acid in Bacillus subtilis. Identification of genes and regulation.</title>
        <authorList>
            <person name="Perego M."/>
            <person name="Glaser P."/>
            <person name="Minutello A."/>
            <person name="Strauch M.A."/>
            <person name="Leopold K."/>
            <person name="Fischer W."/>
        </authorList>
    </citation>
    <scope>FUNCTION</scope>
    <scope>PATHWAY</scope>
</reference>
<reference key="4">
    <citation type="journal article" date="2015" name="FEBS Lett.">
        <title>High-resolution structures of the D-alanyl carrier protein (Dcp) DltC from Bacillus subtilis reveal equivalent conformations of apo- and holo-forms.</title>
        <authorList>
            <person name="Zimmermann S."/>
            <person name="Pfennig S."/>
            <person name="Neumann P."/>
            <person name="Yonus H."/>
            <person name="Weininger U."/>
            <person name="Kovermann M."/>
            <person name="Balbach J."/>
            <person name="Stubbs M.T."/>
        </authorList>
    </citation>
    <scope>X-RAY CRYSTALLOGRAPHY (1.01 ANGSTROMS)</scope>
    <scope>PHOSPHOPANTETHEINYLATION AT SER-36</scope>
</reference>
<protein>
    <recommendedName>
        <fullName evidence="1">D-alanyl carrier protein</fullName>
        <shortName evidence="1">DCP</shortName>
    </recommendedName>
    <alternativeName>
        <fullName evidence="1">D-alanine--poly(phosphoribitol) ligase subunit 2</fullName>
    </alternativeName>
</protein>
<gene>
    <name evidence="1" type="primary">dltC</name>
    <name type="ordered locus">BSU38520</name>
    <name type="ORF">ipa-3r</name>
</gene>
<proteinExistence type="evidence at protein level"/>